<dbReference type="EMBL" id="M80831">
    <property type="protein sequence ID" value="AAA33705.1"/>
    <property type="molecule type" value="mRNA"/>
</dbReference>
<dbReference type="SMR" id="P27164"/>
<dbReference type="GO" id="GO:0016460">
    <property type="term" value="C:myosin II complex"/>
    <property type="evidence" value="ECO:0007669"/>
    <property type="project" value="TreeGrafter"/>
</dbReference>
<dbReference type="GO" id="GO:0005509">
    <property type="term" value="F:calcium ion binding"/>
    <property type="evidence" value="ECO:0007669"/>
    <property type="project" value="InterPro"/>
</dbReference>
<dbReference type="CDD" id="cd00051">
    <property type="entry name" value="EFh"/>
    <property type="match status" value="2"/>
</dbReference>
<dbReference type="FunFam" id="1.10.238.10:FF:000034">
    <property type="entry name" value="Calmodulin"/>
    <property type="match status" value="1"/>
</dbReference>
<dbReference type="FunFam" id="1.10.238.10:FF:000042">
    <property type="entry name" value="Calmodulin"/>
    <property type="match status" value="1"/>
</dbReference>
<dbReference type="Gene3D" id="1.10.238.10">
    <property type="entry name" value="EF-hand"/>
    <property type="match status" value="3"/>
</dbReference>
<dbReference type="InterPro" id="IPR050230">
    <property type="entry name" value="CALM/Myosin/TropC-like"/>
</dbReference>
<dbReference type="InterPro" id="IPR011992">
    <property type="entry name" value="EF-hand-dom_pair"/>
</dbReference>
<dbReference type="InterPro" id="IPR018247">
    <property type="entry name" value="EF_Hand_1_Ca_BS"/>
</dbReference>
<dbReference type="InterPro" id="IPR002048">
    <property type="entry name" value="EF_hand_dom"/>
</dbReference>
<dbReference type="PANTHER" id="PTHR23048:SF53">
    <property type="entry name" value="CALMODULIN"/>
    <property type="match status" value="1"/>
</dbReference>
<dbReference type="PANTHER" id="PTHR23048">
    <property type="entry name" value="MYOSIN LIGHT CHAIN 1, 3"/>
    <property type="match status" value="1"/>
</dbReference>
<dbReference type="Pfam" id="PF13499">
    <property type="entry name" value="EF-hand_7"/>
    <property type="match status" value="2"/>
</dbReference>
<dbReference type="SMART" id="SM00054">
    <property type="entry name" value="EFh"/>
    <property type="match status" value="4"/>
</dbReference>
<dbReference type="SUPFAM" id="SSF47473">
    <property type="entry name" value="EF-hand"/>
    <property type="match status" value="1"/>
</dbReference>
<dbReference type="PROSITE" id="PS00018">
    <property type="entry name" value="EF_HAND_1"/>
    <property type="match status" value="4"/>
</dbReference>
<dbReference type="PROSITE" id="PS50222">
    <property type="entry name" value="EF_HAND_2"/>
    <property type="match status" value="4"/>
</dbReference>
<proteinExistence type="evidence at transcript level"/>
<name>CALM3_PETHY</name>
<comment type="function">
    <text>Calmodulin mediates the control of a large number of enzymes, ion channels and other proteins by Ca(2+). Among the enzymes to be stimulated by the calmodulin-Ca(2+) complex are a number of protein kinases and phosphatases.</text>
</comment>
<comment type="miscellaneous">
    <text>This protein has four functional calcium-binding sites.</text>
</comment>
<comment type="similarity">
    <text evidence="4">Belongs to the calmodulin family.</text>
</comment>
<protein>
    <recommendedName>
        <fullName>Calmodulin-related protein</fullName>
    </recommendedName>
</protein>
<evidence type="ECO:0000250" key="1"/>
<evidence type="ECO:0000255" key="2">
    <source>
        <dbReference type="PROSITE-ProRule" id="PRU00448"/>
    </source>
</evidence>
<evidence type="ECO:0000256" key="3">
    <source>
        <dbReference type="SAM" id="MobiDB-lite"/>
    </source>
</evidence>
<evidence type="ECO:0000305" key="4"/>
<feature type="initiator methionine" description="Removed" evidence="1">
    <location>
        <position position="1"/>
    </location>
</feature>
<feature type="chain" id="PRO_0000198301" description="Calmodulin-related protein">
    <location>
        <begin position="2"/>
        <end position="184"/>
    </location>
</feature>
<feature type="domain" description="EF-hand 1" evidence="2">
    <location>
        <begin position="8"/>
        <end position="43"/>
    </location>
</feature>
<feature type="domain" description="EF-hand 2" evidence="2">
    <location>
        <begin position="44"/>
        <end position="79"/>
    </location>
</feature>
<feature type="domain" description="EF-hand 3" evidence="2">
    <location>
        <begin position="81"/>
        <end position="116"/>
    </location>
</feature>
<feature type="domain" description="EF-hand 4" evidence="2">
    <location>
        <begin position="117"/>
        <end position="152"/>
    </location>
</feature>
<feature type="region of interest" description="Disordered" evidence="3">
    <location>
        <begin position="156"/>
        <end position="184"/>
    </location>
</feature>
<feature type="compositionally biased region" description="Low complexity" evidence="3">
    <location>
        <begin position="161"/>
        <end position="170"/>
    </location>
</feature>
<feature type="compositionally biased region" description="Basic residues" evidence="3">
    <location>
        <begin position="171"/>
        <end position="184"/>
    </location>
</feature>
<feature type="binding site" evidence="2">
    <location>
        <position position="21"/>
    </location>
    <ligand>
        <name>Ca(2+)</name>
        <dbReference type="ChEBI" id="CHEBI:29108"/>
        <label>1</label>
    </ligand>
</feature>
<feature type="binding site" evidence="2">
    <location>
        <position position="23"/>
    </location>
    <ligand>
        <name>Ca(2+)</name>
        <dbReference type="ChEBI" id="CHEBI:29108"/>
        <label>1</label>
    </ligand>
</feature>
<feature type="binding site" evidence="2">
    <location>
        <position position="25"/>
    </location>
    <ligand>
        <name>Ca(2+)</name>
        <dbReference type="ChEBI" id="CHEBI:29108"/>
        <label>1</label>
    </ligand>
</feature>
<feature type="binding site" evidence="2">
    <location>
        <position position="27"/>
    </location>
    <ligand>
        <name>Ca(2+)</name>
        <dbReference type="ChEBI" id="CHEBI:29108"/>
        <label>1</label>
    </ligand>
</feature>
<feature type="binding site" evidence="2">
    <location>
        <position position="32"/>
    </location>
    <ligand>
        <name>Ca(2+)</name>
        <dbReference type="ChEBI" id="CHEBI:29108"/>
        <label>1</label>
    </ligand>
</feature>
<feature type="binding site" evidence="2">
    <location>
        <position position="57"/>
    </location>
    <ligand>
        <name>Ca(2+)</name>
        <dbReference type="ChEBI" id="CHEBI:29108"/>
        <label>2</label>
    </ligand>
</feature>
<feature type="binding site" evidence="2">
    <location>
        <position position="59"/>
    </location>
    <ligand>
        <name>Ca(2+)</name>
        <dbReference type="ChEBI" id="CHEBI:29108"/>
        <label>2</label>
    </ligand>
</feature>
<feature type="binding site" evidence="2">
    <location>
        <position position="61"/>
    </location>
    <ligand>
        <name>Ca(2+)</name>
        <dbReference type="ChEBI" id="CHEBI:29108"/>
        <label>2</label>
    </ligand>
</feature>
<feature type="binding site" evidence="2">
    <location>
        <position position="63"/>
    </location>
    <ligand>
        <name>Ca(2+)</name>
        <dbReference type="ChEBI" id="CHEBI:29108"/>
        <label>2</label>
    </ligand>
</feature>
<feature type="binding site" evidence="2">
    <location>
        <position position="68"/>
    </location>
    <ligand>
        <name>Ca(2+)</name>
        <dbReference type="ChEBI" id="CHEBI:29108"/>
        <label>2</label>
    </ligand>
</feature>
<feature type="binding site" evidence="2">
    <location>
        <position position="94"/>
    </location>
    <ligand>
        <name>Ca(2+)</name>
        <dbReference type="ChEBI" id="CHEBI:29108"/>
        <label>3</label>
    </ligand>
</feature>
<feature type="binding site" evidence="2">
    <location>
        <position position="96"/>
    </location>
    <ligand>
        <name>Ca(2+)</name>
        <dbReference type="ChEBI" id="CHEBI:29108"/>
        <label>3</label>
    </ligand>
</feature>
<feature type="binding site" evidence="2">
    <location>
        <position position="98"/>
    </location>
    <ligand>
        <name>Ca(2+)</name>
        <dbReference type="ChEBI" id="CHEBI:29108"/>
        <label>3</label>
    </ligand>
</feature>
<feature type="binding site" evidence="2">
    <location>
        <position position="105"/>
    </location>
    <ligand>
        <name>Ca(2+)</name>
        <dbReference type="ChEBI" id="CHEBI:29108"/>
        <label>3</label>
    </ligand>
</feature>
<feature type="binding site" evidence="2">
    <location>
        <position position="130"/>
    </location>
    <ligand>
        <name>Ca(2+)</name>
        <dbReference type="ChEBI" id="CHEBI:29108"/>
        <label>4</label>
    </ligand>
</feature>
<feature type="binding site" evidence="2">
    <location>
        <position position="132"/>
    </location>
    <ligand>
        <name>Ca(2+)</name>
        <dbReference type="ChEBI" id="CHEBI:29108"/>
        <label>4</label>
    </ligand>
</feature>
<feature type="binding site" evidence="2">
    <location>
        <position position="134"/>
    </location>
    <ligand>
        <name>Ca(2+)</name>
        <dbReference type="ChEBI" id="CHEBI:29108"/>
        <label>4</label>
    </ligand>
</feature>
<feature type="binding site" evidence="2">
    <location>
        <position position="136"/>
    </location>
    <ligand>
        <name>Ca(2+)</name>
        <dbReference type="ChEBI" id="CHEBI:29108"/>
        <label>4</label>
    </ligand>
</feature>
<feature type="binding site" evidence="2">
    <location>
        <position position="141"/>
    </location>
    <ligand>
        <name>Ca(2+)</name>
        <dbReference type="ChEBI" id="CHEBI:29108"/>
        <label>4</label>
    </ligand>
</feature>
<feature type="modified residue" description="N6,N6,N6-trimethyllysine" evidence="1">
    <location>
        <position position="116"/>
    </location>
</feature>
<reference key="1">
    <citation type="submission" date="1991-10" db="EMBL/GenBank/DDBJ databases">
        <title>Molecular characterization of petunia cDNAs encoding calmodulins and a calmodulin-related protein.</title>
        <authorList>
            <person name="Chua N.H."/>
            <person name="Carlenor E."/>
            <person name="Fromm H."/>
        </authorList>
    </citation>
    <scope>NUCLEOTIDE SEQUENCE [MRNA]</scope>
</reference>
<accession>P27164</accession>
<sequence length="184" mass="21114">MADQLTDDQISEFKEAFSLFDKDGDGCITTKELGTVMRSLGQNPTEAELQDMINEVDADGNGTIDFPEFLNLMARKMKDTDSEEELKEAFRVFDKDQNGFISAAELRHVMTNLGEKLTDEEVDEMIREADVDGDGQINYEEFVKVMMANRRRRRIEESKRSVNSNISRSNNGRKVRKRDRCTIL</sequence>
<gene>
    <name type="primary">CAM53</name>
</gene>
<organism>
    <name type="scientific">Petunia hybrida</name>
    <name type="common">Petunia</name>
    <dbReference type="NCBI Taxonomy" id="4102"/>
    <lineage>
        <taxon>Eukaryota</taxon>
        <taxon>Viridiplantae</taxon>
        <taxon>Streptophyta</taxon>
        <taxon>Embryophyta</taxon>
        <taxon>Tracheophyta</taxon>
        <taxon>Spermatophyta</taxon>
        <taxon>Magnoliopsida</taxon>
        <taxon>eudicotyledons</taxon>
        <taxon>Gunneridae</taxon>
        <taxon>Pentapetalae</taxon>
        <taxon>asterids</taxon>
        <taxon>lamiids</taxon>
        <taxon>Solanales</taxon>
        <taxon>Solanaceae</taxon>
        <taxon>Petunioideae</taxon>
        <taxon>Petunia</taxon>
    </lineage>
</organism>
<keyword id="KW-0106">Calcium</keyword>
<keyword id="KW-0479">Metal-binding</keyword>
<keyword id="KW-0488">Methylation</keyword>
<keyword id="KW-0677">Repeat</keyword>